<dbReference type="EC" id="5.3.3.2" evidence="1"/>
<dbReference type="EMBL" id="CP000046">
    <property type="protein sequence ID" value="AAW37169.1"/>
    <property type="molecule type" value="Genomic_DNA"/>
</dbReference>
<dbReference type="RefSeq" id="WP_001279381.1">
    <property type="nucleotide sequence ID" value="NZ_JBGOFO010000004.1"/>
</dbReference>
<dbReference type="SMR" id="Q5HDL0"/>
<dbReference type="KEGG" id="sac:SACOL2341"/>
<dbReference type="HOGENOM" id="CLU_065515_0_0_9"/>
<dbReference type="Proteomes" id="UP000000530">
    <property type="component" value="Chromosome"/>
</dbReference>
<dbReference type="GO" id="GO:0005737">
    <property type="term" value="C:cytoplasm"/>
    <property type="evidence" value="ECO:0007669"/>
    <property type="project" value="UniProtKB-SubCell"/>
</dbReference>
<dbReference type="GO" id="GO:0010181">
    <property type="term" value="F:FMN binding"/>
    <property type="evidence" value="ECO:0007669"/>
    <property type="project" value="UniProtKB-UniRule"/>
</dbReference>
<dbReference type="GO" id="GO:0004452">
    <property type="term" value="F:isopentenyl-diphosphate delta-isomerase activity"/>
    <property type="evidence" value="ECO:0007669"/>
    <property type="project" value="UniProtKB-UniRule"/>
</dbReference>
<dbReference type="GO" id="GO:0000287">
    <property type="term" value="F:magnesium ion binding"/>
    <property type="evidence" value="ECO:0007669"/>
    <property type="project" value="UniProtKB-UniRule"/>
</dbReference>
<dbReference type="GO" id="GO:0070402">
    <property type="term" value="F:NADPH binding"/>
    <property type="evidence" value="ECO:0007669"/>
    <property type="project" value="UniProtKB-UniRule"/>
</dbReference>
<dbReference type="GO" id="GO:0016491">
    <property type="term" value="F:oxidoreductase activity"/>
    <property type="evidence" value="ECO:0007669"/>
    <property type="project" value="InterPro"/>
</dbReference>
<dbReference type="GO" id="GO:0008299">
    <property type="term" value="P:isoprenoid biosynthetic process"/>
    <property type="evidence" value="ECO:0007669"/>
    <property type="project" value="UniProtKB-UniRule"/>
</dbReference>
<dbReference type="CDD" id="cd02811">
    <property type="entry name" value="IDI-2_FMN"/>
    <property type="match status" value="1"/>
</dbReference>
<dbReference type="Gene3D" id="3.20.20.70">
    <property type="entry name" value="Aldolase class I"/>
    <property type="match status" value="1"/>
</dbReference>
<dbReference type="HAMAP" id="MF_00354">
    <property type="entry name" value="Idi_2"/>
    <property type="match status" value="1"/>
</dbReference>
<dbReference type="InterPro" id="IPR013785">
    <property type="entry name" value="Aldolase_TIM"/>
</dbReference>
<dbReference type="InterPro" id="IPR000262">
    <property type="entry name" value="FMN-dep_DH"/>
</dbReference>
<dbReference type="InterPro" id="IPR011179">
    <property type="entry name" value="IPdP_isomerase"/>
</dbReference>
<dbReference type="NCBIfam" id="TIGR02151">
    <property type="entry name" value="IPP_isom_2"/>
    <property type="match status" value="1"/>
</dbReference>
<dbReference type="PANTHER" id="PTHR43665">
    <property type="entry name" value="ISOPENTENYL-DIPHOSPHATE DELTA-ISOMERASE"/>
    <property type="match status" value="1"/>
</dbReference>
<dbReference type="PANTHER" id="PTHR43665:SF1">
    <property type="entry name" value="ISOPENTENYL-DIPHOSPHATE DELTA-ISOMERASE"/>
    <property type="match status" value="1"/>
</dbReference>
<dbReference type="Pfam" id="PF01070">
    <property type="entry name" value="FMN_dh"/>
    <property type="match status" value="1"/>
</dbReference>
<dbReference type="PIRSF" id="PIRSF003314">
    <property type="entry name" value="IPP_isomerase"/>
    <property type="match status" value="1"/>
</dbReference>
<dbReference type="SUPFAM" id="SSF51395">
    <property type="entry name" value="FMN-linked oxidoreductases"/>
    <property type="match status" value="1"/>
</dbReference>
<feature type="chain" id="PRO_0000134420" description="Isopentenyl-diphosphate delta-isomerase">
    <location>
        <begin position="1"/>
        <end position="349"/>
    </location>
</feature>
<feature type="binding site" evidence="1">
    <location>
        <begin position="9"/>
        <end position="10"/>
    </location>
    <ligand>
        <name>substrate</name>
    </ligand>
</feature>
<feature type="binding site" evidence="1">
    <location>
        <begin position="65"/>
        <end position="67"/>
    </location>
    <ligand>
        <name>FMN</name>
        <dbReference type="ChEBI" id="CHEBI:58210"/>
    </ligand>
</feature>
<feature type="binding site" evidence="1">
    <location>
        <begin position="95"/>
        <end position="97"/>
    </location>
    <ligand>
        <name>substrate</name>
    </ligand>
</feature>
<feature type="binding site" evidence="1">
    <location>
        <position position="95"/>
    </location>
    <ligand>
        <name>FMN</name>
        <dbReference type="ChEBI" id="CHEBI:58210"/>
    </ligand>
</feature>
<feature type="binding site" evidence="1">
    <location>
        <position position="124"/>
    </location>
    <ligand>
        <name>FMN</name>
        <dbReference type="ChEBI" id="CHEBI:58210"/>
    </ligand>
</feature>
<feature type="binding site" evidence="1">
    <location>
        <position position="154"/>
    </location>
    <ligand>
        <name>substrate</name>
    </ligand>
</feature>
<feature type="binding site" evidence="1">
    <location>
        <position position="155"/>
    </location>
    <ligand>
        <name>Mg(2+)</name>
        <dbReference type="ChEBI" id="CHEBI:18420"/>
    </ligand>
</feature>
<feature type="binding site" evidence="1">
    <location>
        <position position="186"/>
    </location>
    <ligand>
        <name>FMN</name>
        <dbReference type="ChEBI" id="CHEBI:58210"/>
    </ligand>
</feature>
<feature type="binding site" evidence="1">
    <location>
        <position position="211"/>
    </location>
    <ligand>
        <name>FMN</name>
        <dbReference type="ChEBI" id="CHEBI:58210"/>
    </ligand>
</feature>
<feature type="binding site" evidence="1">
    <location>
        <position position="216"/>
    </location>
    <ligand>
        <name>FMN</name>
        <dbReference type="ChEBI" id="CHEBI:58210"/>
    </ligand>
</feature>
<feature type="binding site" evidence="1">
    <location>
        <begin position="262"/>
        <end position="264"/>
    </location>
    <ligand>
        <name>FMN</name>
        <dbReference type="ChEBI" id="CHEBI:58210"/>
    </ligand>
</feature>
<feature type="binding site" evidence="1">
    <location>
        <begin position="283"/>
        <end position="284"/>
    </location>
    <ligand>
        <name>FMN</name>
        <dbReference type="ChEBI" id="CHEBI:58210"/>
    </ligand>
</feature>
<reference key="1">
    <citation type="journal article" date="2005" name="J. Bacteriol.">
        <title>Insights on evolution of virulence and resistance from the complete genome analysis of an early methicillin-resistant Staphylococcus aureus strain and a biofilm-producing methicillin-resistant Staphylococcus epidermidis strain.</title>
        <authorList>
            <person name="Gill S.R."/>
            <person name="Fouts D.E."/>
            <person name="Archer G.L."/>
            <person name="Mongodin E.F."/>
            <person name="DeBoy R.T."/>
            <person name="Ravel J."/>
            <person name="Paulsen I.T."/>
            <person name="Kolonay J.F."/>
            <person name="Brinkac L.M."/>
            <person name="Beanan M.J."/>
            <person name="Dodson R.J."/>
            <person name="Daugherty S.C."/>
            <person name="Madupu R."/>
            <person name="Angiuoli S.V."/>
            <person name="Durkin A.S."/>
            <person name="Haft D.H."/>
            <person name="Vamathevan J.J."/>
            <person name="Khouri H."/>
            <person name="Utterback T.R."/>
            <person name="Lee C."/>
            <person name="Dimitrov G."/>
            <person name="Jiang L."/>
            <person name="Qin H."/>
            <person name="Weidman J."/>
            <person name="Tran K."/>
            <person name="Kang K.H."/>
            <person name="Hance I.R."/>
            <person name="Nelson K.E."/>
            <person name="Fraser C.M."/>
        </authorList>
    </citation>
    <scope>NUCLEOTIDE SEQUENCE [LARGE SCALE GENOMIC DNA]</scope>
    <source>
        <strain>COL</strain>
    </source>
</reference>
<sequence>MSDFQREQRKNEHVEIAMAQSDAMHSDFDKMRFVHHSIPSINVNDIDLTSQTPDLTMAYPVYINAMTGGSEWTKNINEKLAVVARETGLAMAVGSTHAALRNPRMAETFTIARKMNPEGMIFSNVGADVPVEKALEAVELLEAQALQIHVNSPQELVMPEGNREFVTWLDNIASIVSRVSVPVIIKEVGFGMSKELMHDLQQIGVKYVDVSGKGGTNFVDIENERRANKDMDYLSSWGQSTVESLLETTAYQSEISVFASGGLRTPLDAIKSLALGAKATGMSRPFLNQVENNGIAHTVAYVESFIEHMKSIMTMLDAKNIDDLTQKQIVFSPEILSWIEQRNLNIHRG</sequence>
<proteinExistence type="inferred from homology"/>
<name>IDI2_STAAC</name>
<keyword id="KW-0963">Cytoplasm</keyword>
<keyword id="KW-0285">Flavoprotein</keyword>
<keyword id="KW-0288">FMN</keyword>
<keyword id="KW-0413">Isomerase</keyword>
<keyword id="KW-0414">Isoprene biosynthesis</keyword>
<keyword id="KW-0460">Magnesium</keyword>
<keyword id="KW-0479">Metal-binding</keyword>
<keyword id="KW-0521">NADP</keyword>
<organism>
    <name type="scientific">Staphylococcus aureus (strain COL)</name>
    <dbReference type="NCBI Taxonomy" id="93062"/>
    <lineage>
        <taxon>Bacteria</taxon>
        <taxon>Bacillati</taxon>
        <taxon>Bacillota</taxon>
        <taxon>Bacilli</taxon>
        <taxon>Bacillales</taxon>
        <taxon>Staphylococcaceae</taxon>
        <taxon>Staphylococcus</taxon>
    </lineage>
</organism>
<gene>
    <name evidence="1" type="primary">fni</name>
    <name type="ordered locus">SACOL2341</name>
</gene>
<evidence type="ECO:0000255" key="1">
    <source>
        <dbReference type="HAMAP-Rule" id="MF_00354"/>
    </source>
</evidence>
<accession>Q5HDL0</accession>
<protein>
    <recommendedName>
        <fullName evidence="1">Isopentenyl-diphosphate delta-isomerase</fullName>
        <shortName evidence="1">IPP isomerase</shortName>
        <ecNumber evidence="1">5.3.3.2</ecNumber>
    </recommendedName>
    <alternativeName>
        <fullName evidence="1">Isopentenyl diphosphate:dimethylallyl diphosphate isomerase</fullName>
    </alternativeName>
    <alternativeName>
        <fullName evidence="1">Isopentenyl pyrophosphate isomerase</fullName>
    </alternativeName>
    <alternativeName>
        <fullName evidence="1">Type 2 isopentenyl diphosphate isomerase</fullName>
        <shortName evidence="1">IDI-2</shortName>
    </alternativeName>
</protein>
<comment type="function">
    <text evidence="1">Involved in the biosynthesis of isoprenoids. Catalyzes the 1,3-allylic rearrangement of the homoallylic substrate isopentenyl (IPP) to its allylic isomer, dimethylallyl diphosphate (DMAPP).</text>
</comment>
<comment type="catalytic activity">
    <reaction evidence="1">
        <text>isopentenyl diphosphate = dimethylallyl diphosphate</text>
        <dbReference type="Rhea" id="RHEA:23284"/>
        <dbReference type="ChEBI" id="CHEBI:57623"/>
        <dbReference type="ChEBI" id="CHEBI:128769"/>
        <dbReference type="EC" id="5.3.3.2"/>
    </reaction>
</comment>
<comment type="cofactor">
    <cofactor evidence="1">
        <name>FMN</name>
        <dbReference type="ChEBI" id="CHEBI:58210"/>
    </cofactor>
</comment>
<comment type="cofactor">
    <cofactor evidence="1">
        <name>NADPH</name>
        <dbReference type="ChEBI" id="CHEBI:57783"/>
    </cofactor>
</comment>
<comment type="cofactor">
    <cofactor evidence="1">
        <name>Mg(2+)</name>
        <dbReference type="ChEBI" id="CHEBI:18420"/>
    </cofactor>
</comment>
<comment type="subunit">
    <text evidence="1">Homooctamer. Dimer of tetramers.</text>
</comment>
<comment type="subcellular location">
    <subcellularLocation>
        <location evidence="1">Cytoplasm</location>
    </subcellularLocation>
</comment>
<comment type="similarity">
    <text evidence="1">Belongs to the IPP isomerase type 2 family.</text>
</comment>